<keyword id="KW-0963">Cytoplasm</keyword>
<keyword id="KW-0378">Hydrolase</keyword>
<keyword id="KW-0479">Metal-binding</keyword>
<keyword id="KW-0533">Nickel</keyword>
<organism>
    <name type="scientific">Staphylococcus epidermidis (strain ATCC 12228 / FDA PCI 1200)</name>
    <dbReference type="NCBI Taxonomy" id="176280"/>
    <lineage>
        <taxon>Bacteria</taxon>
        <taxon>Bacillati</taxon>
        <taxon>Bacillota</taxon>
        <taxon>Bacilli</taxon>
        <taxon>Bacillales</taxon>
        <taxon>Staphylococcaceae</taxon>
        <taxon>Staphylococcus</taxon>
    </lineage>
</organism>
<name>URE1_STAES</name>
<dbReference type="EC" id="3.5.1.5" evidence="1"/>
<dbReference type="EMBL" id="AE015929">
    <property type="protein sequence ID" value="AAO05504.1"/>
    <property type="molecule type" value="Genomic_DNA"/>
</dbReference>
<dbReference type="RefSeq" id="NP_765418.1">
    <property type="nucleotide sequence ID" value="NC_004461.1"/>
</dbReference>
<dbReference type="RefSeq" id="WP_001832399.1">
    <property type="nucleotide sequence ID" value="NZ_WBME01000034.1"/>
</dbReference>
<dbReference type="SMR" id="Q8CNC9"/>
<dbReference type="GeneID" id="50018036"/>
<dbReference type="KEGG" id="sep:SE_1863"/>
<dbReference type="PATRIC" id="fig|176280.10.peg.1820"/>
<dbReference type="eggNOG" id="COG0804">
    <property type="taxonomic scope" value="Bacteria"/>
</dbReference>
<dbReference type="HOGENOM" id="CLU_000980_0_0_9"/>
<dbReference type="OrthoDB" id="9802793at2"/>
<dbReference type="UniPathway" id="UPA00258">
    <property type="reaction ID" value="UER00370"/>
</dbReference>
<dbReference type="Proteomes" id="UP000001411">
    <property type="component" value="Chromosome"/>
</dbReference>
<dbReference type="GO" id="GO:0005737">
    <property type="term" value="C:cytoplasm"/>
    <property type="evidence" value="ECO:0007669"/>
    <property type="project" value="UniProtKB-SubCell"/>
</dbReference>
<dbReference type="GO" id="GO:0016151">
    <property type="term" value="F:nickel cation binding"/>
    <property type="evidence" value="ECO:0007669"/>
    <property type="project" value="UniProtKB-UniRule"/>
</dbReference>
<dbReference type="GO" id="GO:0009039">
    <property type="term" value="F:urease activity"/>
    <property type="evidence" value="ECO:0007669"/>
    <property type="project" value="UniProtKB-UniRule"/>
</dbReference>
<dbReference type="GO" id="GO:0043419">
    <property type="term" value="P:urea catabolic process"/>
    <property type="evidence" value="ECO:0007669"/>
    <property type="project" value="UniProtKB-UniRule"/>
</dbReference>
<dbReference type="CDD" id="cd00375">
    <property type="entry name" value="Urease_alpha"/>
    <property type="match status" value="1"/>
</dbReference>
<dbReference type="Gene3D" id="3.20.20.140">
    <property type="entry name" value="Metal-dependent hydrolases"/>
    <property type="match status" value="1"/>
</dbReference>
<dbReference type="Gene3D" id="2.30.40.10">
    <property type="entry name" value="Urease, subunit C, domain 1"/>
    <property type="match status" value="1"/>
</dbReference>
<dbReference type="HAMAP" id="MF_01953">
    <property type="entry name" value="Urease_alpha"/>
    <property type="match status" value="1"/>
</dbReference>
<dbReference type="InterPro" id="IPR006680">
    <property type="entry name" value="Amidohydro-rel"/>
</dbReference>
<dbReference type="InterPro" id="IPR011059">
    <property type="entry name" value="Metal-dep_hydrolase_composite"/>
</dbReference>
<dbReference type="InterPro" id="IPR032466">
    <property type="entry name" value="Metal_Hydrolase"/>
</dbReference>
<dbReference type="InterPro" id="IPR011612">
    <property type="entry name" value="Urease_alpha_N_dom"/>
</dbReference>
<dbReference type="InterPro" id="IPR050112">
    <property type="entry name" value="Urease_alpha_subunit"/>
</dbReference>
<dbReference type="InterPro" id="IPR017950">
    <property type="entry name" value="Urease_AS"/>
</dbReference>
<dbReference type="InterPro" id="IPR005848">
    <property type="entry name" value="Urease_asu"/>
</dbReference>
<dbReference type="InterPro" id="IPR017951">
    <property type="entry name" value="Urease_asu_c"/>
</dbReference>
<dbReference type="InterPro" id="IPR029754">
    <property type="entry name" value="Urease_Ni-bd"/>
</dbReference>
<dbReference type="NCBIfam" id="NF009686">
    <property type="entry name" value="PRK13207.1"/>
    <property type="match status" value="1"/>
</dbReference>
<dbReference type="NCBIfam" id="TIGR01792">
    <property type="entry name" value="urease_alph"/>
    <property type="match status" value="1"/>
</dbReference>
<dbReference type="PANTHER" id="PTHR43440">
    <property type="entry name" value="UREASE"/>
    <property type="match status" value="1"/>
</dbReference>
<dbReference type="PANTHER" id="PTHR43440:SF1">
    <property type="entry name" value="UREASE"/>
    <property type="match status" value="1"/>
</dbReference>
<dbReference type="Pfam" id="PF01979">
    <property type="entry name" value="Amidohydro_1"/>
    <property type="match status" value="1"/>
</dbReference>
<dbReference type="Pfam" id="PF00449">
    <property type="entry name" value="Urease_alpha"/>
    <property type="match status" value="1"/>
</dbReference>
<dbReference type="PRINTS" id="PR01752">
    <property type="entry name" value="UREASE"/>
</dbReference>
<dbReference type="SUPFAM" id="SSF51338">
    <property type="entry name" value="Composite domain of metallo-dependent hydrolases"/>
    <property type="match status" value="1"/>
</dbReference>
<dbReference type="SUPFAM" id="SSF51556">
    <property type="entry name" value="Metallo-dependent hydrolases"/>
    <property type="match status" value="1"/>
</dbReference>
<dbReference type="PROSITE" id="PS01120">
    <property type="entry name" value="UREASE_1"/>
    <property type="match status" value="1"/>
</dbReference>
<dbReference type="PROSITE" id="PS00145">
    <property type="entry name" value="UREASE_2"/>
    <property type="match status" value="1"/>
</dbReference>
<dbReference type="PROSITE" id="PS51368">
    <property type="entry name" value="UREASE_3"/>
    <property type="match status" value="1"/>
</dbReference>
<reference key="1">
    <citation type="journal article" date="2003" name="Mol. Microbiol.">
        <title>Genome-based analysis of virulence genes in a non-biofilm-forming Staphylococcus epidermidis strain (ATCC 12228).</title>
        <authorList>
            <person name="Zhang Y.-Q."/>
            <person name="Ren S.-X."/>
            <person name="Li H.-L."/>
            <person name="Wang Y.-X."/>
            <person name="Fu G."/>
            <person name="Yang J."/>
            <person name="Qin Z.-Q."/>
            <person name="Miao Y.-G."/>
            <person name="Wang W.-Y."/>
            <person name="Chen R.-S."/>
            <person name="Shen Y."/>
            <person name="Chen Z."/>
            <person name="Yuan Z.-H."/>
            <person name="Zhao G.-P."/>
            <person name="Qu D."/>
            <person name="Danchin A."/>
            <person name="Wen Y.-M."/>
        </authorList>
    </citation>
    <scope>NUCLEOTIDE SEQUENCE [LARGE SCALE GENOMIC DNA]</scope>
    <source>
        <strain>ATCC 12228 / FDA PCI 1200</strain>
    </source>
</reference>
<feature type="chain" id="PRO_0000067558" description="Urease subunit alpha">
    <location>
        <begin position="1"/>
        <end position="571"/>
    </location>
</feature>
<feature type="domain" description="Urease" evidence="1">
    <location>
        <begin position="133"/>
        <end position="571"/>
    </location>
</feature>
<feature type="active site" description="Proton donor" evidence="1">
    <location>
        <position position="324"/>
    </location>
</feature>
<feature type="binding site" evidence="1">
    <location>
        <position position="138"/>
    </location>
    <ligand>
        <name>Ni(2+)</name>
        <dbReference type="ChEBI" id="CHEBI:49786"/>
        <label>1</label>
    </ligand>
</feature>
<feature type="binding site" evidence="1">
    <location>
        <position position="140"/>
    </location>
    <ligand>
        <name>Ni(2+)</name>
        <dbReference type="ChEBI" id="CHEBI:49786"/>
        <label>1</label>
    </ligand>
</feature>
<feature type="binding site" description="via carbamate group" evidence="1">
    <location>
        <position position="221"/>
    </location>
    <ligand>
        <name>Ni(2+)</name>
        <dbReference type="ChEBI" id="CHEBI:49786"/>
        <label>1</label>
    </ligand>
</feature>
<feature type="binding site" description="via carbamate group" evidence="1">
    <location>
        <position position="221"/>
    </location>
    <ligand>
        <name>Ni(2+)</name>
        <dbReference type="ChEBI" id="CHEBI:49786"/>
        <label>2</label>
    </ligand>
</feature>
<feature type="binding site" evidence="1">
    <location>
        <position position="223"/>
    </location>
    <ligand>
        <name>substrate</name>
    </ligand>
</feature>
<feature type="binding site" evidence="1">
    <location>
        <position position="250"/>
    </location>
    <ligand>
        <name>Ni(2+)</name>
        <dbReference type="ChEBI" id="CHEBI:49786"/>
        <label>2</label>
    </ligand>
</feature>
<feature type="binding site" evidence="1">
    <location>
        <position position="276"/>
    </location>
    <ligand>
        <name>Ni(2+)</name>
        <dbReference type="ChEBI" id="CHEBI:49786"/>
        <label>2</label>
    </ligand>
</feature>
<feature type="binding site" evidence="1">
    <location>
        <position position="364"/>
    </location>
    <ligand>
        <name>Ni(2+)</name>
        <dbReference type="ChEBI" id="CHEBI:49786"/>
        <label>1</label>
    </ligand>
</feature>
<feature type="modified residue" description="N6-carboxylysine" evidence="1">
    <location>
        <position position="221"/>
    </location>
</feature>
<protein>
    <recommendedName>
        <fullName evidence="1">Urease subunit alpha</fullName>
        <ecNumber evidence="1">3.5.1.5</ecNumber>
    </recommendedName>
    <alternativeName>
        <fullName evidence="1">Urea amidohydrolase subunit alpha</fullName>
    </alternativeName>
</protein>
<evidence type="ECO:0000255" key="1">
    <source>
        <dbReference type="HAMAP-Rule" id="MF_01953"/>
    </source>
</evidence>
<accession>Q8CNC9</accession>
<proteinExistence type="inferred from homology"/>
<comment type="catalytic activity">
    <reaction evidence="1">
        <text>urea + 2 H2O + H(+) = hydrogencarbonate + 2 NH4(+)</text>
        <dbReference type="Rhea" id="RHEA:20557"/>
        <dbReference type="ChEBI" id="CHEBI:15377"/>
        <dbReference type="ChEBI" id="CHEBI:15378"/>
        <dbReference type="ChEBI" id="CHEBI:16199"/>
        <dbReference type="ChEBI" id="CHEBI:17544"/>
        <dbReference type="ChEBI" id="CHEBI:28938"/>
        <dbReference type="EC" id="3.5.1.5"/>
    </reaction>
</comment>
<comment type="cofactor">
    <cofactor evidence="1">
        <name>Ni cation</name>
        <dbReference type="ChEBI" id="CHEBI:25516"/>
    </cofactor>
    <text evidence="1">Binds 2 nickel ions per subunit.</text>
</comment>
<comment type="pathway">
    <text evidence="1">Nitrogen metabolism; urea degradation; CO(2) and NH(3) from urea (urease route): step 1/1.</text>
</comment>
<comment type="subunit">
    <text evidence="1">Heterotrimer of UreA (gamma), UreB (beta) and UreC (alpha) subunits. Three heterotrimers associate to form the active enzyme.</text>
</comment>
<comment type="subcellular location">
    <subcellularLocation>
        <location evidence="1">Cytoplasm</location>
    </subcellularLocation>
</comment>
<comment type="PTM">
    <text evidence="1">Carboxylation allows a single lysine to coordinate two nickel ions.</text>
</comment>
<comment type="similarity">
    <text evidence="1">Belongs to the metallo-dependent hydrolases superfamily. Urease alpha subunit family.</text>
</comment>
<gene>
    <name evidence="1" type="primary">ureC</name>
    <name type="ordered locus">SE_1863</name>
</gene>
<sequence>MSFKMTQSQYTSLYGPTVGDSVRLGDTNLFAQVEKDYANYGDEATFGGGKSIRDGMAQNPNVTRDDKNVADLVLTNALIIDYDKIVKADIGIKNGYIFKIGKAGNPDIMDNVDIIIGATTDIIAAEGKIVTAGGIDTHVHFINPEQAEVALESGITTHIGGGTGASEGAKATTVTPGPWHIHRMLEAAEEMPINVGFTGKGQAVNHTALIEQIHAGAIGLKVHEDWGATPSALSHALDVADEFDVQVALHADTLNEAGFMEDTMAAVKDRVLHMYHTEGAGGGHAPDLIKSAAYSNILPSSTNPTLPYTHNTVDEHLDMVMITHHLNASIPEDIAFADSRIRKETIAAEDVLQDMGVFSMVSSDSQAMGRVGEVVTRTWQVAHRMKEQRGPLDGDFEYHDNNRIKRYIAKYTINPAITHGISDYVGSVEAGKLADLVMWEPEFFGAKPDLVVKGGMINSAVNGDANGSIPTSEPLKYRKMYGQFGGNITHTAMTFVSNTAYENGIYRQLNLKRMVRPVRNIRNLTKADMKNNNATPKIDVDPQTYEVFVDGNKITSEAATELPLTQRYFLF</sequence>